<feature type="chain" id="PRO_0000439653" description="Transcription factor MYB61">
    <location>
        <begin position="1"/>
        <end position="366"/>
    </location>
</feature>
<feature type="domain" description="HTH myb-type 1" evidence="1">
    <location>
        <begin position="9"/>
        <end position="61"/>
    </location>
</feature>
<feature type="domain" description="HTH myb-type 2" evidence="1">
    <location>
        <begin position="62"/>
        <end position="116"/>
    </location>
</feature>
<feature type="DNA-binding region" description="H-T-H motif" evidence="1">
    <location>
        <begin position="37"/>
        <end position="61"/>
    </location>
</feature>
<feature type="DNA-binding region" description="H-T-H motif" evidence="1">
    <location>
        <begin position="89"/>
        <end position="112"/>
    </location>
</feature>
<feature type="region of interest" description="Disordered" evidence="2">
    <location>
        <begin position="115"/>
        <end position="164"/>
    </location>
</feature>
<feature type="compositionally biased region" description="Basic and acidic residues" evidence="2">
    <location>
        <begin position="124"/>
        <end position="141"/>
    </location>
</feature>
<feature type="sequence conflict" description="In Ref. 5; AAC83618." evidence="10" ref="5">
    <original>P</original>
    <variation>H</variation>
    <location>
        <position position="231"/>
    </location>
</feature>
<proteinExistence type="evidence at transcript level"/>
<protein>
    <recommendedName>
        <fullName evidence="10">Transcription factor MYB61</fullName>
    </recommendedName>
    <alternativeName>
        <fullName evidence="10">Myb-related protein 61</fullName>
        <shortName evidence="8">AtMYB61</shortName>
    </alternativeName>
</protein>
<name>MYB61_ARATH</name>
<reference key="1">
    <citation type="submission" date="2004-01" db="EMBL/GenBank/DDBJ databases">
        <title>The MYB transcription factor family in Arabidopsis: a genome-wide cloning and expression pattern analysis.</title>
        <authorList>
            <person name="Qu L."/>
            <person name="Gu H."/>
        </authorList>
    </citation>
    <scope>NUCLEOTIDE SEQUENCE [MRNA]</scope>
</reference>
<reference key="2">
    <citation type="journal article" date="2000" name="Nature">
        <title>Sequence and analysis of chromosome 1 of the plant Arabidopsis thaliana.</title>
        <authorList>
            <person name="Theologis A."/>
            <person name="Ecker J.R."/>
            <person name="Palm C.J."/>
            <person name="Federspiel N.A."/>
            <person name="Kaul S."/>
            <person name="White O."/>
            <person name="Alonso J."/>
            <person name="Altafi H."/>
            <person name="Araujo R."/>
            <person name="Bowman C.L."/>
            <person name="Brooks S.Y."/>
            <person name="Buehler E."/>
            <person name="Chan A."/>
            <person name="Chao Q."/>
            <person name="Chen H."/>
            <person name="Cheuk R.F."/>
            <person name="Chin C.W."/>
            <person name="Chung M.K."/>
            <person name="Conn L."/>
            <person name="Conway A.B."/>
            <person name="Conway A.R."/>
            <person name="Creasy T.H."/>
            <person name="Dewar K."/>
            <person name="Dunn P."/>
            <person name="Etgu P."/>
            <person name="Feldblyum T.V."/>
            <person name="Feng J.-D."/>
            <person name="Fong B."/>
            <person name="Fujii C.Y."/>
            <person name="Gill J.E."/>
            <person name="Goldsmith A.D."/>
            <person name="Haas B."/>
            <person name="Hansen N.F."/>
            <person name="Hughes B."/>
            <person name="Huizar L."/>
            <person name="Hunter J.L."/>
            <person name="Jenkins J."/>
            <person name="Johnson-Hopson C."/>
            <person name="Khan S."/>
            <person name="Khaykin E."/>
            <person name="Kim C.J."/>
            <person name="Koo H.L."/>
            <person name="Kremenetskaia I."/>
            <person name="Kurtz D.B."/>
            <person name="Kwan A."/>
            <person name="Lam B."/>
            <person name="Langin-Hooper S."/>
            <person name="Lee A."/>
            <person name="Lee J.M."/>
            <person name="Lenz C.A."/>
            <person name="Li J.H."/>
            <person name="Li Y.-P."/>
            <person name="Lin X."/>
            <person name="Liu S.X."/>
            <person name="Liu Z.A."/>
            <person name="Luros J.S."/>
            <person name="Maiti R."/>
            <person name="Marziali A."/>
            <person name="Militscher J."/>
            <person name="Miranda M."/>
            <person name="Nguyen M."/>
            <person name="Nierman W.C."/>
            <person name="Osborne B.I."/>
            <person name="Pai G."/>
            <person name="Peterson J."/>
            <person name="Pham P.K."/>
            <person name="Rizzo M."/>
            <person name="Rooney T."/>
            <person name="Rowley D."/>
            <person name="Sakano H."/>
            <person name="Salzberg S.L."/>
            <person name="Schwartz J.R."/>
            <person name="Shinn P."/>
            <person name="Southwick A.M."/>
            <person name="Sun H."/>
            <person name="Tallon L.J."/>
            <person name="Tambunga G."/>
            <person name="Toriumi M.J."/>
            <person name="Town C.D."/>
            <person name="Utterback T."/>
            <person name="Van Aken S."/>
            <person name="Vaysberg M."/>
            <person name="Vysotskaia V.S."/>
            <person name="Walker M."/>
            <person name="Wu D."/>
            <person name="Yu G."/>
            <person name="Fraser C.M."/>
            <person name="Venter J.C."/>
            <person name="Davis R.W."/>
        </authorList>
    </citation>
    <scope>NUCLEOTIDE SEQUENCE [LARGE SCALE GENOMIC DNA]</scope>
    <source>
        <strain>cv. Columbia</strain>
    </source>
</reference>
<reference key="3">
    <citation type="journal article" date="2017" name="Plant J.">
        <title>Araport11: a complete reannotation of the Arabidopsis thaliana reference genome.</title>
        <authorList>
            <person name="Cheng C.Y."/>
            <person name="Krishnakumar V."/>
            <person name="Chan A.P."/>
            <person name="Thibaud-Nissen F."/>
            <person name="Schobel S."/>
            <person name="Town C.D."/>
        </authorList>
    </citation>
    <scope>GENOME REANNOTATION</scope>
    <source>
        <strain>cv. Columbia</strain>
    </source>
</reference>
<reference key="4">
    <citation type="journal article" date="2003" name="Science">
        <title>Empirical analysis of transcriptional activity in the Arabidopsis genome.</title>
        <authorList>
            <person name="Yamada K."/>
            <person name="Lim J."/>
            <person name="Dale J.M."/>
            <person name="Chen H."/>
            <person name="Shinn P."/>
            <person name="Palm C.J."/>
            <person name="Southwick A.M."/>
            <person name="Wu H.C."/>
            <person name="Kim C.J."/>
            <person name="Nguyen M."/>
            <person name="Pham P.K."/>
            <person name="Cheuk R.F."/>
            <person name="Karlin-Newmann G."/>
            <person name="Liu S.X."/>
            <person name="Lam B."/>
            <person name="Sakano H."/>
            <person name="Wu T."/>
            <person name="Yu G."/>
            <person name="Miranda M."/>
            <person name="Quach H.L."/>
            <person name="Tripp M."/>
            <person name="Chang C.H."/>
            <person name="Lee J.M."/>
            <person name="Toriumi M.J."/>
            <person name="Chan M.M."/>
            <person name="Tang C.C."/>
            <person name="Onodera C.S."/>
            <person name="Deng J.M."/>
            <person name="Akiyama K."/>
            <person name="Ansari Y."/>
            <person name="Arakawa T."/>
            <person name="Banh J."/>
            <person name="Banno F."/>
            <person name="Bowser L."/>
            <person name="Brooks S.Y."/>
            <person name="Carninci P."/>
            <person name="Chao Q."/>
            <person name="Choy N."/>
            <person name="Enju A."/>
            <person name="Goldsmith A.D."/>
            <person name="Gurjal M."/>
            <person name="Hansen N.F."/>
            <person name="Hayashizaki Y."/>
            <person name="Johnson-Hopson C."/>
            <person name="Hsuan V.W."/>
            <person name="Iida K."/>
            <person name="Karnes M."/>
            <person name="Khan S."/>
            <person name="Koesema E."/>
            <person name="Ishida J."/>
            <person name="Jiang P.X."/>
            <person name="Jones T."/>
            <person name="Kawai J."/>
            <person name="Kamiya A."/>
            <person name="Meyers C."/>
            <person name="Nakajima M."/>
            <person name="Narusaka M."/>
            <person name="Seki M."/>
            <person name="Sakurai T."/>
            <person name="Satou M."/>
            <person name="Tamse R."/>
            <person name="Vaysberg M."/>
            <person name="Wallender E.K."/>
            <person name="Wong C."/>
            <person name="Yamamura Y."/>
            <person name="Yuan S."/>
            <person name="Shinozaki K."/>
            <person name="Davis R.W."/>
            <person name="Theologis A."/>
            <person name="Ecker J.R."/>
        </authorList>
    </citation>
    <scope>NUCLEOTIDE SEQUENCE [LARGE SCALE MRNA]</scope>
    <source>
        <strain>cv. Columbia</strain>
    </source>
</reference>
<reference key="5">
    <citation type="journal article" date="1998" name="Plant J.">
        <title>Towards functional characterisation of the members of the R2R3-MYB gene family from Arabidopsis thaliana.</title>
        <authorList>
            <person name="Kranz H.D."/>
            <person name="Denekamp M."/>
            <person name="Greco R."/>
            <person name="Jin H.-L."/>
            <person name="Leyva A."/>
            <person name="Meissner R.C."/>
            <person name="Petroni K."/>
            <person name="Urzainqui A."/>
            <person name="Bevan M."/>
            <person name="Martin C."/>
            <person name="Smeekens S."/>
            <person name="Tonelli C."/>
            <person name="Paz-Ares J."/>
            <person name="Weisshaar B."/>
        </authorList>
    </citation>
    <scope>NUCLEOTIDE SEQUENCE [MRNA] OF 76-366</scope>
    <source>
        <strain>cv. Columbia</strain>
    </source>
</reference>
<reference key="6">
    <citation type="journal article" date="2005" name="Curr. Biol.">
        <title>AtMYB61, an R2R3-MYB transcription factor controlling stomatal aperture in Arabidopsis thaliana.</title>
        <authorList>
            <person name="Liang Y.K."/>
            <person name="Dubos C."/>
            <person name="Dodd I.C."/>
            <person name="Holroyd G.H."/>
            <person name="Hetherington A.M."/>
            <person name="Campbell M.M."/>
        </authorList>
    </citation>
    <scope>FUNCTION</scope>
    <scope>SUBCELLULAR LOCATION</scope>
    <scope>TISSUE SPECIFICITY</scope>
    <scope>DISRUPTION PHENOTYPE</scope>
</reference>
<reference key="7">
    <citation type="journal article" date="2009" name="J. Exp. Bot.">
        <title>MUM ENHANCERS are important for seed coat mucilage production and mucilage secretory cell differentiation in Arabidopsis thaliana.</title>
        <authorList>
            <person name="Arsovski A.A."/>
            <person name="Villota M.M."/>
            <person name="Rowland O."/>
            <person name="Subramaniam R."/>
            <person name="Western T.L."/>
        </authorList>
    </citation>
    <scope>FUNCTION</scope>
    <scope>DISRUPTION PHENOTYPE</scope>
</reference>
<reference key="8">
    <citation type="journal article" date="2012" name="New Phytol.">
        <title>AtMYB61, an R2R3-MYB transcription factor, functions as a pleiotropic regulator via a small gene network.</title>
        <authorList>
            <person name="Romano J.M."/>
            <person name="Dubos C."/>
            <person name="Prouse M.B."/>
            <person name="Wilkins O."/>
            <person name="Hong H."/>
            <person name="Poole M."/>
            <person name="Kang K.Y."/>
            <person name="Li E."/>
            <person name="Douglas C.J."/>
            <person name="Western T.L."/>
            <person name="Mansfield S.D."/>
            <person name="Campbell M.M."/>
        </authorList>
    </citation>
    <scope>FUNCTION</scope>
    <scope>TISSUE SPECIFICITY</scope>
    <scope>DISRUPTION PHENOTYPE</scope>
</reference>
<reference key="9">
    <citation type="journal article" date="2013" name="PLoS ONE">
        <title>Interactions between the R2R3-MYB transcription factor, AtMYB61, and target DNA binding sites.</title>
        <authorList>
            <person name="Prouse M.B."/>
            <person name="Campbell M.M."/>
        </authorList>
    </citation>
    <scope>FUNCTION</scope>
</reference>
<reference key="10">
    <citation type="journal article" date="2017" name="Plant J.">
        <title>AaMYB1, and its orthologue AtMYB61, affect terpene metabolism and trichome development in Artemisia annua and Arabidopsis thaliana.</title>
        <authorList>
            <person name="Matias-Hernandez L."/>
            <person name="Jiang W."/>
            <person name="Yang K."/>
            <person name="Tang K."/>
            <person name="Brodelius P.E."/>
            <person name="Pelaz S."/>
        </authorList>
    </citation>
    <scope>FUNCTION</scope>
</reference>
<sequence length="366" mass="40891">MGRHSCCYKQKLRKGLWSPEEDEKLLTHITNHGHGCWSSVPKLAGLQRCGKSCRLRWINYLRPDLKRGAFSPEEENLIVELHAVLGNRWSQIASRLPGRTDNEIKNLWNSSIKKKLKQRGIDPNTHKPISEVESFSDKDKPTTSNNKRSGNDHKSPSSSSATNQDFFLERPSDLSDYFGFQKLNFNSNLGLSVTTDSSLCSMIPPQFSPGNMVGSVLQTPVCVKPSISLPPDNNSSSPISGGDHVKLAAPNWEFQTNNNNTSNFFDNGGFSWSIPNSSTSSSQVKPNHNFEEIKWSEYLNTPFFIGSTVQSQTSQPIYIKSETDYLANVSNMTDPWSQNENLGTTETSDVFSKDLQRMAVSFGQSL</sequence>
<dbReference type="EMBL" id="AY519552">
    <property type="protein sequence ID" value="AAS10022.1"/>
    <property type="molecule type" value="mRNA"/>
</dbReference>
<dbReference type="EMBL" id="AC003970">
    <property type="protein sequence ID" value="AAC33214.1"/>
    <property type="status" value="ALT_SEQ"/>
    <property type="molecule type" value="Genomic_DNA"/>
</dbReference>
<dbReference type="EMBL" id="CP002684">
    <property type="protein sequence ID" value="AEE28459.1"/>
    <property type="molecule type" value="Genomic_DNA"/>
</dbReference>
<dbReference type="EMBL" id="AY063939">
    <property type="protein sequence ID" value="AAL36295.1"/>
    <property type="molecule type" value="mRNA"/>
</dbReference>
<dbReference type="EMBL" id="AY096523">
    <property type="protein sequence ID" value="AAM20173.1"/>
    <property type="molecule type" value="mRNA"/>
</dbReference>
<dbReference type="EMBL" id="AF062896">
    <property type="protein sequence ID" value="AAC83618.1"/>
    <property type="molecule type" value="mRNA"/>
</dbReference>
<dbReference type="PIR" id="A86229">
    <property type="entry name" value="A86229"/>
</dbReference>
<dbReference type="PIR" id="T51668">
    <property type="entry name" value="T51668"/>
</dbReference>
<dbReference type="RefSeq" id="NP_172425.2">
    <property type="nucleotide sequence ID" value="NM_100825.5"/>
</dbReference>
<dbReference type="SMR" id="Q8VZQ2"/>
<dbReference type="FunCoup" id="Q8VZQ2">
    <property type="interactions" value="59"/>
</dbReference>
<dbReference type="IntAct" id="Q8VZQ2">
    <property type="interactions" value="1"/>
</dbReference>
<dbReference type="STRING" id="3702.Q8VZQ2"/>
<dbReference type="iPTMnet" id="Q8VZQ2"/>
<dbReference type="PaxDb" id="3702-AT1G09540.1"/>
<dbReference type="ProteomicsDB" id="248915"/>
<dbReference type="EnsemblPlants" id="AT1G09540.1">
    <property type="protein sequence ID" value="AT1G09540.1"/>
    <property type="gene ID" value="AT1G09540"/>
</dbReference>
<dbReference type="GeneID" id="837480"/>
<dbReference type="Gramene" id="AT1G09540.1">
    <property type="protein sequence ID" value="AT1G09540.1"/>
    <property type="gene ID" value="AT1G09540"/>
</dbReference>
<dbReference type="KEGG" id="ath:AT1G09540"/>
<dbReference type="Araport" id="AT1G09540"/>
<dbReference type="TAIR" id="AT1G09540">
    <property type="gene designation" value="MYB61"/>
</dbReference>
<dbReference type="eggNOG" id="KOG0048">
    <property type="taxonomic scope" value="Eukaryota"/>
</dbReference>
<dbReference type="HOGENOM" id="CLU_028567_10_1_1"/>
<dbReference type="InParanoid" id="Q8VZQ2"/>
<dbReference type="OMA" id="AEEIKWS"/>
<dbReference type="PhylomeDB" id="Q8VZQ2"/>
<dbReference type="PRO" id="PR:Q8VZQ2"/>
<dbReference type="Proteomes" id="UP000006548">
    <property type="component" value="Chromosome 1"/>
</dbReference>
<dbReference type="ExpressionAtlas" id="Q8VZQ2">
    <property type="expression patterns" value="baseline and differential"/>
</dbReference>
<dbReference type="GO" id="GO:0005634">
    <property type="term" value="C:nucleus"/>
    <property type="evidence" value="ECO:0007669"/>
    <property type="project" value="UniProtKB-SubCell"/>
</dbReference>
<dbReference type="GO" id="GO:0003700">
    <property type="term" value="F:DNA-binding transcription factor activity"/>
    <property type="evidence" value="ECO:0000314"/>
    <property type="project" value="TAIR"/>
</dbReference>
<dbReference type="GO" id="GO:0000976">
    <property type="term" value="F:transcription cis-regulatory region binding"/>
    <property type="evidence" value="ECO:0000353"/>
    <property type="project" value="TAIR"/>
</dbReference>
<dbReference type="GO" id="GO:0010087">
    <property type="term" value="P:phloem or xylem histogenesis"/>
    <property type="evidence" value="ECO:0000315"/>
    <property type="project" value="TAIR"/>
</dbReference>
<dbReference type="GO" id="GO:0010119">
    <property type="term" value="P:regulation of stomatal movement"/>
    <property type="evidence" value="ECO:0000315"/>
    <property type="project" value="TAIR"/>
</dbReference>
<dbReference type="GO" id="GO:0048364">
    <property type="term" value="P:root development"/>
    <property type="evidence" value="ECO:0000315"/>
    <property type="project" value="TAIR"/>
</dbReference>
<dbReference type="GO" id="GO:0010214">
    <property type="term" value="P:seed coat development"/>
    <property type="evidence" value="ECO:0000315"/>
    <property type="project" value="TAIR"/>
</dbReference>
<dbReference type="GO" id="GO:0010089">
    <property type="term" value="P:xylem development"/>
    <property type="evidence" value="ECO:0000315"/>
    <property type="project" value="TAIR"/>
</dbReference>
<dbReference type="CDD" id="cd00167">
    <property type="entry name" value="SANT"/>
    <property type="match status" value="2"/>
</dbReference>
<dbReference type="FunFam" id="1.10.10.60:FF:000221">
    <property type="entry name" value="MYB transcription factor"/>
    <property type="match status" value="1"/>
</dbReference>
<dbReference type="FunFam" id="1.10.10.60:FF:000047">
    <property type="entry name" value="Myb transcription factor"/>
    <property type="match status" value="1"/>
</dbReference>
<dbReference type="Gene3D" id="1.10.10.60">
    <property type="entry name" value="Homeodomain-like"/>
    <property type="match status" value="2"/>
</dbReference>
<dbReference type="InterPro" id="IPR009057">
    <property type="entry name" value="Homeodomain-like_sf"/>
</dbReference>
<dbReference type="InterPro" id="IPR017930">
    <property type="entry name" value="Myb_dom"/>
</dbReference>
<dbReference type="InterPro" id="IPR051953">
    <property type="entry name" value="Plant_SW-associated_TFs"/>
</dbReference>
<dbReference type="InterPro" id="IPR001005">
    <property type="entry name" value="SANT/Myb"/>
</dbReference>
<dbReference type="PANTHER" id="PTHR47997">
    <property type="entry name" value="MYB DOMAIN PROTEIN 55"/>
    <property type="match status" value="1"/>
</dbReference>
<dbReference type="PANTHER" id="PTHR47997:SF88">
    <property type="entry name" value="TRANSCRIPTION FACTOR MYB61"/>
    <property type="match status" value="1"/>
</dbReference>
<dbReference type="Pfam" id="PF00249">
    <property type="entry name" value="Myb_DNA-binding"/>
    <property type="match status" value="2"/>
</dbReference>
<dbReference type="SMART" id="SM00717">
    <property type="entry name" value="SANT"/>
    <property type="match status" value="2"/>
</dbReference>
<dbReference type="SUPFAM" id="SSF46689">
    <property type="entry name" value="Homeodomain-like"/>
    <property type="match status" value="1"/>
</dbReference>
<dbReference type="PROSITE" id="PS51294">
    <property type="entry name" value="HTH_MYB"/>
    <property type="match status" value="2"/>
</dbReference>
<organism>
    <name type="scientific">Arabidopsis thaliana</name>
    <name type="common">Mouse-ear cress</name>
    <dbReference type="NCBI Taxonomy" id="3702"/>
    <lineage>
        <taxon>Eukaryota</taxon>
        <taxon>Viridiplantae</taxon>
        <taxon>Streptophyta</taxon>
        <taxon>Embryophyta</taxon>
        <taxon>Tracheophyta</taxon>
        <taxon>Spermatophyta</taxon>
        <taxon>Magnoliopsida</taxon>
        <taxon>eudicotyledons</taxon>
        <taxon>Gunneridae</taxon>
        <taxon>Pentapetalae</taxon>
        <taxon>rosids</taxon>
        <taxon>malvids</taxon>
        <taxon>Brassicales</taxon>
        <taxon>Brassicaceae</taxon>
        <taxon>Camelineae</taxon>
        <taxon>Arabidopsis</taxon>
    </lineage>
</organism>
<gene>
    <name evidence="9" type="primary">MYB61</name>
    <name evidence="11" type="ordered locus">At1g09540</name>
    <name evidence="12" type="ORF">F14J9.20</name>
</gene>
<accession>Q8VZQ2</accession>
<accession>Q9SAV9</accession>
<accession>Q9SBF9</accession>
<evidence type="ECO:0000255" key="1">
    <source>
        <dbReference type="PROSITE-ProRule" id="PRU00625"/>
    </source>
</evidence>
<evidence type="ECO:0000256" key="2">
    <source>
        <dbReference type="SAM" id="MobiDB-lite"/>
    </source>
</evidence>
<evidence type="ECO:0000269" key="3">
    <source>
    </source>
</evidence>
<evidence type="ECO:0000269" key="4">
    <source>
    </source>
</evidence>
<evidence type="ECO:0000269" key="5">
    <source>
    </source>
</evidence>
<evidence type="ECO:0000269" key="6">
    <source>
    </source>
</evidence>
<evidence type="ECO:0000269" key="7">
    <source>
    </source>
</evidence>
<evidence type="ECO:0000303" key="8">
    <source>
    </source>
</evidence>
<evidence type="ECO:0000303" key="9">
    <source>
    </source>
</evidence>
<evidence type="ECO:0000305" key="10"/>
<evidence type="ECO:0000312" key="11">
    <source>
        <dbReference type="Araport" id="AT1G09540"/>
    </source>
</evidence>
<evidence type="ECO:0000312" key="12">
    <source>
        <dbReference type="EMBL" id="AAC33214.1"/>
    </source>
</evidence>
<comment type="function">
    <text evidence="3 4 5 6 7">Transcription factor that coordinates a small network of downstream target genes required for several aspects of plant growth and development, such as xylem formation and xylem cell differentiation, and lateral root formation (PubMed:22708996). Regulates a specific set of target genes by binding DNA to the AC cis-element 5'-ACCTAC-3' (PubMed:23741471). Functions as a transcriptional regulator of stomatal closure. Plays a role the regulation of stomatal pore size independently of abscisic acid (ABA) (PubMed:16005292). Required for seed coat mucilage deposition during the development of the seed coat epidermis (PubMed:19401413). Involved in the induction of trichome initiation and branching by positively regulating GL1 and GL2. Required for gibberellin (GA) biosynthesis and degradation by positively affecting the expression of the enzymes that convert GA9 into the bioactive GA4, as well as the enzymes involved in the degradation of GA4 (PubMed:28207974).</text>
</comment>
<comment type="subcellular location">
    <subcellularLocation>
        <location evidence="1 3">Nucleus</location>
    </subcellularLocation>
</comment>
<comment type="tissue specificity">
    <text evidence="3 5">Expressed specifically in guard cells (PubMed:16005292). Expressed in sink tissues, such as xylem, roots and developing seeds (PubMed:22708996).</text>
</comment>
<comment type="disruption phenotype">
    <text evidence="3 4 5">Increased stomatal pore opening (PubMed:16005292). Reduced amount of seed mucilage (PubMed:19401413). Early germination, slow growth, delayed flowering and senescence (PubMed:22708996).</text>
</comment>
<comment type="sequence caution" evidence="10">
    <conflict type="erroneous gene model prediction">
        <sequence resource="EMBL-CDS" id="AAC33214"/>
    </conflict>
</comment>
<keyword id="KW-0217">Developmental protein</keyword>
<keyword id="KW-0238">DNA-binding</keyword>
<keyword id="KW-0539">Nucleus</keyword>
<keyword id="KW-1185">Reference proteome</keyword>
<keyword id="KW-0677">Repeat</keyword>
<keyword id="KW-0804">Transcription</keyword>
<keyword id="KW-0805">Transcription regulation</keyword>